<gene>
    <name type="primary">RPL27C</name>
    <name type="ordered locus">At4g15000</name>
    <name type="ORF">dl3545w</name>
    <name type="ORF">FCAALL.99</name>
</gene>
<reference key="1">
    <citation type="journal article" date="1998" name="Nature">
        <title>Analysis of 1.9 Mb of contiguous sequence from chromosome 4 of Arabidopsis thaliana.</title>
        <authorList>
            <person name="Bevan M."/>
            <person name="Bancroft I."/>
            <person name="Bent E."/>
            <person name="Love K."/>
            <person name="Goodman H.M."/>
            <person name="Dean C."/>
            <person name="Bergkamp R."/>
            <person name="Dirkse W."/>
            <person name="van Staveren M."/>
            <person name="Stiekema W."/>
            <person name="Drost L."/>
            <person name="Ridley P."/>
            <person name="Hudson S.-A."/>
            <person name="Patel K."/>
            <person name="Murphy G."/>
            <person name="Piffanelli P."/>
            <person name="Wedler H."/>
            <person name="Wedler E."/>
            <person name="Wambutt R."/>
            <person name="Weitzenegger T."/>
            <person name="Pohl T."/>
            <person name="Terryn N."/>
            <person name="Gielen J."/>
            <person name="Villarroel R."/>
            <person name="De Clercq R."/>
            <person name="van Montagu M."/>
            <person name="Lecharny A."/>
            <person name="Aubourg S."/>
            <person name="Gy I."/>
            <person name="Kreis M."/>
            <person name="Lao N."/>
            <person name="Kavanagh T."/>
            <person name="Hempel S."/>
            <person name="Kotter P."/>
            <person name="Entian K.-D."/>
            <person name="Rieger M."/>
            <person name="Schaefer M."/>
            <person name="Funk B."/>
            <person name="Mueller-Auer S."/>
            <person name="Silvey M."/>
            <person name="James R."/>
            <person name="Monfort A."/>
            <person name="Pons A."/>
            <person name="Puigdomenech P."/>
            <person name="Douka A."/>
            <person name="Voukelatou E."/>
            <person name="Milioni D."/>
            <person name="Hatzopoulos P."/>
            <person name="Piravandi E."/>
            <person name="Obermaier B."/>
            <person name="Hilbert H."/>
            <person name="Duesterhoeft A."/>
            <person name="Moores T."/>
            <person name="Jones J.D.G."/>
            <person name="Eneva T."/>
            <person name="Palme K."/>
            <person name="Benes V."/>
            <person name="Rechmann S."/>
            <person name="Ansorge W."/>
            <person name="Cooke R."/>
            <person name="Berger C."/>
            <person name="Delseny M."/>
            <person name="Voet M."/>
            <person name="Volckaert G."/>
            <person name="Mewes H.-W."/>
            <person name="Klosterman S."/>
            <person name="Schueller C."/>
            <person name="Chalwatzis N."/>
        </authorList>
    </citation>
    <scope>NUCLEOTIDE SEQUENCE [LARGE SCALE GENOMIC DNA]</scope>
    <source>
        <strain>cv. Columbia</strain>
    </source>
</reference>
<reference key="2">
    <citation type="journal article" date="1999" name="Nature">
        <title>Sequence and analysis of chromosome 4 of the plant Arabidopsis thaliana.</title>
        <authorList>
            <person name="Mayer K.F.X."/>
            <person name="Schueller C."/>
            <person name="Wambutt R."/>
            <person name="Murphy G."/>
            <person name="Volckaert G."/>
            <person name="Pohl T."/>
            <person name="Duesterhoeft A."/>
            <person name="Stiekema W."/>
            <person name="Entian K.-D."/>
            <person name="Terryn N."/>
            <person name="Harris B."/>
            <person name="Ansorge W."/>
            <person name="Brandt P."/>
            <person name="Grivell L.A."/>
            <person name="Rieger M."/>
            <person name="Weichselgartner M."/>
            <person name="de Simone V."/>
            <person name="Obermaier B."/>
            <person name="Mache R."/>
            <person name="Mueller M."/>
            <person name="Kreis M."/>
            <person name="Delseny M."/>
            <person name="Puigdomenech P."/>
            <person name="Watson M."/>
            <person name="Schmidtheini T."/>
            <person name="Reichert B."/>
            <person name="Portetelle D."/>
            <person name="Perez-Alonso M."/>
            <person name="Boutry M."/>
            <person name="Bancroft I."/>
            <person name="Vos P."/>
            <person name="Hoheisel J."/>
            <person name="Zimmermann W."/>
            <person name="Wedler H."/>
            <person name="Ridley P."/>
            <person name="Langham S.-A."/>
            <person name="McCullagh B."/>
            <person name="Bilham L."/>
            <person name="Robben J."/>
            <person name="van der Schueren J."/>
            <person name="Grymonprez B."/>
            <person name="Chuang Y.-J."/>
            <person name="Vandenbussche F."/>
            <person name="Braeken M."/>
            <person name="Weltjens I."/>
            <person name="Voet M."/>
            <person name="Bastiaens I."/>
            <person name="Aert R."/>
            <person name="Defoor E."/>
            <person name="Weitzenegger T."/>
            <person name="Bothe G."/>
            <person name="Ramsperger U."/>
            <person name="Hilbert H."/>
            <person name="Braun M."/>
            <person name="Holzer E."/>
            <person name="Brandt A."/>
            <person name="Peters S."/>
            <person name="van Staveren M."/>
            <person name="Dirkse W."/>
            <person name="Mooijman P."/>
            <person name="Klein Lankhorst R."/>
            <person name="Rose M."/>
            <person name="Hauf J."/>
            <person name="Koetter P."/>
            <person name="Berneiser S."/>
            <person name="Hempel S."/>
            <person name="Feldpausch M."/>
            <person name="Lamberth S."/>
            <person name="Van den Daele H."/>
            <person name="De Keyser A."/>
            <person name="Buysshaert C."/>
            <person name="Gielen J."/>
            <person name="Villarroel R."/>
            <person name="De Clercq R."/>
            <person name="van Montagu M."/>
            <person name="Rogers J."/>
            <person name="Cronin A."/>
            <person name="Quail M.A."/>
            <person name="Bray-Allen S."/>
            <person name="Clark L."/>
            <person name="Doggett J."/>
            <person name="Hall S."/>
            <person name="Kay M."/>
            <person name="Lennard N."/>
            <person name="McLay K."/>
            <person name="Mayes R."/>
            <person name="Pettett A."/>
            <person name="Rajandream M.A."/>
            <person name="Lyne M."/>
            <person name="Benes V."/>
            <person name="Rechmann S."/>
            <person name="Borkova D."/>
            <person name="Bloecker H."/>
            <person name="Scharfe M."/>
            <person name="Grimm M."/>
            <person name="Loehnert T.-H."/>
            <person name="Dose S."/>
            <person name="de Haan M."/>
            <person name="Maarse A.C."/>
            <person name="Schaefer M."/>
            <person name="Mueller-Auer S."/>
            <person name="Gabel C."/>
            <person name="Fuchs M."/>
            <person name="Fartmann B."/>
            <person name="Granderath K."/>
            <person name="Dauner D."/>
            <person name="Herzl A."/>
            <person name="Neumann S."/>
            <person name="Argiriou A."/>
            <person name="Vitale D."/>
            <person name="Liguori R."/>
            <person name="Piravandi E."/>
            <person name="Massenet O."/>
            <person name="Quigley F."/>
            <person name="Clabauld G."/>
            <person name="Muendlein A."/>
            <person name="Felber R."/>
            <person name="Schnabl S."/>
            <person name="Hiller R."/>
            <person name="Schmidt W."/>
            <person name="Lecharny A."/>
            <person name="Aubourg S."/>
            <person name="Chefdor F."/>
            <person name="Cooke R."/>
            <person name="Berger C."/>
            <person name="Monfort A."/>
            <person name="Casacuberta E."/>
            <person name="Gibbons T."/>
            <person name="Weber N."/>
            <person name="Vandenbol M."/>
            <person name="Bargues M."/>
            <person name="Terol J."/>
            <person name="Torres A."/>
            <person name="Perez-Perez A."/>
            <person name="Purnelle B."/>
            <person name="Bent E."/>
            <person name="Johnson S."/>
            <person name="Tacon D."/>
            <person name="Jesse T."/>
            <person name="Heijnen L."/>
            <person name="Schwarz S."/>
            <person name="Scholler P."/>
            <person name="Heber S."/>
            <person name="Francs P."/>
            <person name="Bielke C."/>
            <person name="Frishman D."/>
            <person name="Haase D."/>
            <person name="Lemcke K."/>
            <person name="Mewes H.-W."/>
            <person name="Stocker S."/>
            <person name="Zaccaria P."/>
            <person name="Bevan M."/>
            <person name="Wilson R.K."/>
            <person name="de la Bastide M."/>
            <person name="Habermann K."/>
            <person name="Parnell L."/>
            <person name="Dedhia N."/>
            <person name="Gnoj L."/>
            <person name="Schutz K."/>
            <person name="Huang E."/>
            <person name="Spiegel L."/>
            <person name="Sekhon M."/>
            <person name="Murray J."/>
            <person name="Sheet P."/>
            <person name="Cordes M."/>
            <person name="Abu-Threideh J."/>
            <person name="Stoneking T."/>
            <person name="Kalicki J."/>
            <person name="Graves T."/>
            <person name="Harmon G."/>
            <person name="Edwards J."/>
            <person name="Latreille P."/>
            <person name="Courtney L."/>
            <person name="Cloud J."/>
            <person name="Abbott A."/>
            <person name="Scott K."/>
            <person name="Johnson D."/>
            <person name="Minx P."/>
            <person name="Bentley D."/>
            <person name="Fulton B."/>
            <person name="Miller N."/>
            <person name="Greco T."/>
            <person name="Kemp K."/>
            <person name="Kramer J."/>
            <person name="Fulton L."/>
            <person name="Mardis E."/>
            <person name="Dante M."/>
            <person name="Pepin K."/>
            <person name="Hillier L.W."/>
            <person name="Nelson J."/>
            <person name="Spieth J."/>
            <person name="Ryan E."/>
            <person name="Andrews S."/>
            <person name="Geisel C."/>
            <person name="Layman D."/>
            <person name="Du H."/>
            <person name="Ali J."/>
            <person name="Berghoff A."/>
            <person name="Jones K."/>
            <person name="Drone K."/>
            <person name="Cotton M."/>
            <person name="Joshu C."/>
            <person name="Antonoiu B."/>
            <person name="Zidanic M."/>
            <person name="Strong C."/>
            <person name="Sun H."/>
            <person name="Lamar B."/>
            <person name="Yordan C."/>
            <person name="Ma P."/>
            <person name="Zhong J."/>
            <person name="Preston R."/>
            <person name="Vil D."/>
            <person name="Shekher M."/>
            <person name="Matero A."/>
            <person name="Shah R."/>
            <person name="Swaby I.K."/>
            <person name="O'Shaughnessy A."/>
            <person name="Rodriguez M."/>
            <person name="Hoffman J."/>
            <person name="Till S."/>
            <person name="Granat S."/>
            <person name="Shohdy N."/>
            <person name="Hasegawa A."/>
            <person name="Hameed A."/>
            <person name="Lodhi M."/>
            <person name="Johnson A."/>
            <person name="Chen E."/>
            <person name="Marra M.A."/>
            <person name="Martienssen R."/>
            <person name="McCombie W.R."/>
        </authorList>
    </citation>
    <scope>NUCLEOTIDE SEQUENCE [LARGE SCALE GENOMIC DNA]</scope>
    <source>
        <strain>cv. Columbia</strain>
    </source>
</reference>
<reference key="3">
    <citation type="journal article" date="2017" name="Plant J.">
        <title>Araport11: a complete reannotation of the Arabidopsis thaliana reference genome.</title>
        <authorList>
            <person name="Cheng C.Y."/>
            <person name="Krishnakumar V."/>
            <person name="Chan A.P."/>
            <person name="Thibaud-Nissen F."/>
            <person name="Schobel S."/>
            <person name="Town C.D."/>
        </authorList>
    </citation>
    <scope>GENOME REANNOTATION</scope>
    <source>
        <strain>cv. Columbia</strain>
    </source>
</reference>
<reference key="4">
    <citation type="journal article" date="2003" name="Science">
        <title>Empirical analysis of transcriptional activity in the Arabidopsis genome.</title>
        <authorList>
            <person name="Yamada K."/>
            <person name="Lim J."/>
            <person name="Dale J.M."/>
            <person name="Chen H."/>
            <person name="Shinn P."/>
            <person name="Palm C.J."/>
            <person name="Southwick A.M."/>
            <person name="Wu H.C."/>
            <person name="Kim C.J."/>
            <person name="Nguyen M."/>
            <person name="Pham P.K."/>
            <person name="Cheuk R.F."/>
            <person name="Karlin-Newmann G."/>
            <person name="Liu S.X."/>
            <person name="Lam B."/>
            <person name="Sakano H."/>
            <person name="Wu T."/>
            <person name="Yu G."/>
            <person name="Miranda M."/>
            <person name="Quach H.L."/>
            <person name="Tripp M."/>
            <person name="Chang C.H."/>
            <person name="Lee J.M."/>
            <person name="Toriumi M.J."/>
            <person name="Chan M.M."/>
            <person name="Tang C.C."/>
            <person name="Onodera C.S."/>
            <person name="Deng J.M."/>
            <person name="Akiyama K."/>
            <person name="Ansari Y."/>
            <person name="Arakawa T."/>
            <person name="Banh J."/>
            <person name="Banno F."/>
            <person name="Bowser L."/>
            <person name="Brooks S.Y."/>
            <person name="Carninci P."/>
            <person name="Chao Q."/>
            <person name="Choy N."/>
            <person name="Enju A."/>
            <person name="Goldsmith A.D."/>
            <person name="Gurjal M."/>
            <person name="Hansen N.F."/>
            <person name="Hayashizaki Y."/>
            <person name="Johnson-Hopson C."/>
            <person name="Hsuan V.W."/>
            <person name="Iida K."/>
            <person name="Karnes M."/>
            <person name="Khan S."/>
            <person name="Koesema E."/>
            <person name="Ishida J."/>
            <person name="Jiang P.X."/>
            <person name="Jones T."/>
            <person name="Kawai J."/>
            <person name="Kamiya A."/>
            <person name="Meyers C."/>
            <person name="Nakajima M."/>
            <person name="Narusaka M."/>
            <person name="Seki M."/>
            <person name="Sakurai T."/>
            <person name="Satou M."/>
            <person name="Tamse R."/>
            <person name="Vaysberg M."/>
            <person name="Wallender E.K."/>
            <person name="Wong C."/>
            <person name="Yamamura Y."/>
            <person name="Yuan S."/>
            <person name="Shinozaki K."/>
            <person name="Davis R.W."/>
            <person name="Theologis A."/>
            <person name="Ecker J.R."/>
        </authorList>
    </citation>
    <scope>NUCLEOTIDE SEQUENCE [LARGE SCALE MRNA]</scope>
    <source>
        <strain>cv. Columbia</strain>
    </source>
</reference>
<reference key="5">
    <citation type="submission" date="2002-03" db="EMBL/GenBank/DDBJ databases">
        <title>Full-length cDNA from Arabidopsis thaliana.</title>
        <authorList>
            <person name="Brover V.V."/>
            <person name="Troukhan M.E."/>
            <person name="Alexandrov N.A."/>
            <person name="Lu Y.-P."/>
            <person name="Flavell R.B."/>
            <person name="Feldmann K.A."/>
        </authorList>
    </citation>
    <scope>NUCLEOTIDE SEQUENCE [LARGE SCALE MRNA]</scope>
</reference>
<reference key="6">
    <citation type="journal article" date="1996" name="Plant J.">
        <title>Further progress towards a catalogue of all Arabidopsis genes: analysis of a set of 5000 non-redundant ESTs.</title>
        <authorList>
            <person name="Cooke R."/>
            <person name="Raynal M."/>
            <person name="Laudie M."/>
            <person name="Grellet F."/>
            <person name="Delseny M."/>
            <person name="Morris P.-C."/>
            <person name="Guerrier D."/>
            <person name="Giraudat J."/>
            <person name="Quigley F."/>
            <person name="Clabault G."/>
            <person name="Li Y.-F."/>
            <person name="Mache R."/>
            <person name="Krivitzky M."/>
            <person name="Gy I.J.-J."/>
            <person name="Kreis M."/>
            <person name="Lecharny A."/>
            <person name="Parmentier Y."/>
            <person name="Marbach J."/>
            <person name="Fleck J."/>
            <person name="Clement B."/>
            <person name="Philipps G."/>
            <person name="Herve C."/>
            <person name="Bardet C."/>
            <person name="Tremousaygue D."/>
            <person name="Lescure B."/>
            <person name="Lacomme C."/>
            <person name="Roby D."/>
            <person name="Jourjon M.-F."/>
            <person name="Chabrier P."/>
            <person name="Charpenteau J.-L."/>
            <person name="Desprez T."/>
            <person name="Amselem J."/>
            <person name="Chiapello H."/>
            <person name="Hoefte H."/>
        </authorList>
    </citation>
    <scope>NUCLEOTIDE SEQUENCE [LARGE SCALE MRNA] OF 108-135</scope>
    <source>
        <strain>cv. Columbia</strain>
    </source>
</reference>
<reference key="7">
    <citation type="journal article" date="2001" name="Plant Physiol.">
        <title>The organization of cytoplasmic ribosomal protein genes in the Arabidopsis genome.</title>
        <authorList>
            <person name="Barakat A."/>
            <person name="Szick-Miranda K."/>
            <person name="Chang I.-F."/>
            <person name="Guyot R."/>
            <person name="Blanc G."/>
            <person name="Cooke R."/>
            <person name="Delseny M."/>
            <person name="Bailey-Serres J."/>
        </authorList>
    </citation>
    <scope>GENE FAMILY ORGANIZATION</scope>
    <scope>NOMENCLATURE</scope>
</reference>
<reference key="8">
    <citation type="journal article" date="2023" name="Plant Cell">
        <title>An updated nomenclature for plant ribosomal protein genes.</title>
        <authorList>
            <person name="Scarpin M.R."/>
            <person name="Busche M."/>
            <person name="Martinez R.E."/>
            <person name="Harper L.C."/>
            <person name="Reiser L."/>
            <person name="Szakonyi D."/>
            <person name="Merchante C."/>
            <person name="Lan T."/>
            <person name="Xiong W."/>
            <person name="Mo B."/>
            <person name="Tang G."/>
            <person name="Chen X."/>
            <person name="Bailey-Serres J."/>
            <person name="Browning K.S."/>
            <person name="Brunkard J.O."/>
        </authorList>
    </citation>
    <scope>NOMENCLATURE</scope>
</reference>
<proteinExistence type="evidence at transcript level"/>
<dbReference type="EMBL" id="Z97337">
    <property type="protein sequence ID" value="CAB10279.1"/>
    <property type="molecule type" value="Genomic_DNA"/>
</dbReference>
<dbReference type="EMBL" id="AL161540">
    <property type="protein sequence ID" value="CAB78542.1"/>
    <property type="molecule type" value="Genomic_DNA"/>
</dbReference>
<dbReference type="EMBL" id="CP002687">
    <property type="protein sequence ID" value="AEE83535.1"/>
    <property type="molecule type" value="Genomic_DNA"/>
</dbReference>
<dbReference type="EMBL" id="AY063987">
    <property type="protein sequence ID" value="AAL36343.1"/>
    <property type="molecule type" value="mRNA"/>
</dbReference>
<dbReference type="EMBL" id="AY096731">
    <property type="protein sequence ID" value="AAM20365.1"/>
    <property type="molecule type" value="mRNA"/>
</dbReference>
<dbReference type="EMBL" id="AY085487">
    <property type="protein sequence ID" value="AAM62713.1"/>
    <property type="molecule type" value="mRNA"/>
</dbReference>
<dbReference type="EMBL" id="Z35388">
    <property type="protein sequence ID" value="CAA84577.1"/>
    <property type="molecule type" value="mRNA"/>
</dbReference>
<dbReference type="PIR" id="E71413">
    <property type="entry name" value="E71413"/>
</dbReference>
<dbReference type="RefSeq" id="NP_193236.1">
    <molecule id="P51419-1"/>
    <property type="nucleotide sequence ID" value="NM_117587.3"/>
</dbReference>
<dbReference type="SMR" id="P51419"/>
<dbReference type="BioGRID" id="12456">
    <property type="interactions" value="185"/>
</dbReference>
<dbReference type="FunCoup" id="P51419">
    <property type="interactions" value="3143"/>
</dbReference>
<dbReference type="STRING" id="3702.P51419"/>
<dbReference type="iPTMnet" id="P51419"/>
<dbReference type="PaxDb" id="3702-AT4G15000.1"/>
<dbReference type="EnsemblPlants" id="AT4G15000.1">
    <molecule id="P51419-1"/>
    <property type="protein sequence ID" value="AT4G15000.1"/>
    <property type="gene ID" value="AT4G15000"/>
</dbReference>
<dbReference type="GeneID" id="827159"/>
<dbReference type="Gramene" id="AT4G15000.1">
    <molecule id="P51419-1"/>
    <property type="protein sequence ID" value="AT4G15000.1"/>
    <property type="gene ID" value="AT4G15000"/>
</dbReference>
<dbReference type="KEGG" id="ath:AT4G15000"/>
<dbReference type="Araport" id="AT4G15000"/>
<dbReference type="TAIR" id="AT4G15000"/>
<dbReference type="eggNOG" id="KOG3418">
    <property type="taxonomic scope" value="Eukaryota"/>
</dbReference>
<dbReference type="HOGENOM" id="CLU_067359_0_1_1"/>
<dbReference type="InParanoid" id="P51419"/>
<dbReference type="OMA" id="NQWFFTK"/>
<dbReference type="OrthoDB" id="2365484at2759"/>
<dbReference type="PhylomeDB" id="P51419"/>
<dbReference type="CD-CODE" id="4299E36E">
    <property type="entry name" value="Nucleolus"/>
</dbReference>
<dbReference type="PRO" id="PR:P51419"/>
<dbReference type="Proteomes" id="UP000006548">
    <property type="component" value="Chromosome 4"/>
</dbReference>
<dbReference type="ExpressionAtlas" id="P51419">
    <property type="expression patterns" value="baseline and differential"/>
</dbReference>
<dbReference type="GO" id="GO:0005829">
    <property type="term" value="C:cytosol"/>
    <property type="evidence" value="ECO:0007005"/>
    <property type="project" value="TAIR"/>
</dbReference>
<dbReference type="GO" id="GO:0022625">
    <property type="term" value="C:cytosolic large ribosomal subunit"/>
    <property type="evidence" value="ECO:0007005"/>
    <property type="project" value="TAIR"/>
</dbReference>
<dbReference type="GO" id="GO:0022626">
    <property type="term" value="C:cytosolic ribosome"/>
    <property type="evidence" value="ECO:0007005"/>
    <property type="project" value="TAIR"/>
</dbReference>
<dbReference type="GO" id="GO:0003729">
    <property type="term" value="F:mRNA binding"/>
    <property type="evidence" value="ECO:0000314"/>
    <property type="project" value="TAIR"/>
</dbReference>
<dbReference type="GO" id="GO:0003735">
    <property type="term" value="F:structural constituent of ribosome"/>
    <property type="evidence" value="ECO:0000314"/>
    <property type="project" value="CAFA"/>
</dbReference>
<dbReference type="GO" id="GO:0006412">
    <property type="term" value="P:translation"/>
    <property type="evidence" value="ECO:0007669"/>
    <property type="project" value="InterPro"/>
</dbReference>
<dbReference type="CDD" id="cd06090">
    <property type="entry name" value="KOW_RPL27"/>
    <property type="match status" value="1"/>
</dbReference>
<dbReference type="FunFam" id="2.30.30.770:FF:000001">
    <property type="entry name" value="60S ribosomal protein L27"/>
    <property type="match status" value="1"/>
</dbReference>
<dbReference type="Gene3D" id="2.30.30.770">
    <property type="match status" value="1"/>
</dbReference>
<dbReference type="InterPro" id="IPR001141">
    <property type="entry name" value="Ribosomal_eL27"/>
</dbReference>
<dbReference type="InterPro" id="IPR018262">
    <property type="entry name" value="Ribosomal_eL27_CS"/>
</dbReference>
<dbReference type="InterPro" id="IPR041991">
    <property type="entry name" value="Ribosomal_eL27_KOW"/>
</dbReference>
<dbReference type="InterPro" id="IPR038655">
    <property type="entry name" value="Ribosomal_eL27_sf"/>
</dbReference>
<dbReference type="InterPro" id="IPR008991">
    <property type="entry name" value="Translation_prot_SH3-like_sf"/>
</dbReference>
<dbReference type="PANTHER" id="PTHR10497">
    <property type="entry name" value="60S RIBOSOMAL PROTEIN L27"/>
    <property type="match status" value="1"/>
</dbReference>
<dbReference type="Pfam" id="PF01777">
    <property type="entry name" value="Ribosomal_L27e"/>
    <property type="match status" value="1"/>
</dbReference>
<dbReference type="SUPFAM" id="SSF50104">
    <property type="entry name" value="Translation proteins SH3-like domain"/>
    <property type="match status" value="1"/>
</dbReference>
<dbReference type="PROSITE" id="PS01107">
    <property type="entry name" value="RIBOSOMAL_L27E"/>
    <property type="match status" value="1"/>
</dbReference>
<name>RL273_ARATH</name>
<comment type="alternative products">
    <event type="alternative splicing"/>
    <isoform>
        <id>P51419-1</id>
        <name>1</name>
        <sequence type="displayed"/>
    </isoform>
    <text>A number of isoforms are produced. According to EST sequences.</text>
</comment>
<comment type="similarity">
    <text evidence="2">Belongs to the eukaryotic ribosomal protein eL27 family.</text>
</comment>
<accession>P51419</accession>
<accession>O23354</accession>
<evidence type="ECO:0000303" key="1">
    <source>
    </source>
</evidence>
<evidence type="ECO:0000305" key="2"/>
<protein>
    <recommendedName>
        <fullName evidence="1">Large ribosomal subunit protein eL27x</fullName>
    </recommendedName>
    <alternativeName>
        <fullName>60S ribosomal protein L27-3</fullName>
    </alternativeName>
</protein>
<keyword id="KW-0025">Alternative splicing</keyword>
<keyword id="KW-1185">Reference proteome</keyword>
<keyword id="KW-0687">Ribonucleoprotein</keyword>
<keyword id="KW-0689">Ribosomal protein</keyword>
<feature type="chain" id="PRO_0000126085" description="Large ribosomal subunit protein eL27x">
    <location>
        <begin position="1"/>
        <end position="135"/>
    </location>
</feature>
<feature type="sequence conflict" description="In Ref. 6; CAA84577." evidence="2" ref="6">
    <original>A</original>
    <variation>P</variation>
    <location>
        <position position="108"/>
    </location>
</feature>
<sequence>MVKFLKQNKAVILLQGRYAGKKAVIIKSFDDGNRDRPYGHCLVAGLKKYPSKVIRKDSAKKTAKKSRVKCFIKLVNYQHLMPTRYTLDVDLKEVATLDALQSKDKKVAALKEAKAKLEERFKTGKNRWFFTKLRF</sequence>
<organism>
    <name type="scientific">Arabidopsis thaliana</name>
    <name type="common">Mouse-ear cress</name>
    <dbReference type="NCBI Taxonomy" id="3702"/>
    <lineage>
        <taxon>Eukaryota</taxon>
        <taxon>Viridiplantae</taxon>
        <taxon>Streptophyta</taxon>
        <taxon>Embryophyta</taxon>
        <taxon>Tracheophyta</taxon>
        <taxon>Spermatophyta</taxon>
        <taxon>Magnoliopsida</taxon>
        <taxon>eudicotyledons</taxon>
        <taxon>Gunneridae</taxon>
        <taxon>Pentapetalae</taxon>
        <taxon>rosids</taxon>
        <taxon>malvids</taxon>
        <taxon>Brassicales</taxon>
        <taxon>Brassicaceae</taxon>
        <taxon>Camelineae</taxon>
        <taxon>Arabidopsis</taxon>
    </lineage>
</organism>